<protein>
    <recommendedName>
        <fullName>Probable alginate O-acetylase AlgJ</fullName>
        <ecNumber>2.3.1.-</ecNumber>
    </recommendedName>
    <alternativeName>
        <fullName>Alginate biosynthesis protein AlgJ</fullName>
    </alternativeName>
</protein>
<accession>Q51393</accession>
<keyword id="KW-0012">Acyltransferase</keyword>
<keyword id="KW-0016">Alginate biosynthesis</keyword>
<keyword id="KW-0997">Cell inner membrane</keyword>
<keyword id="KW-1003">Cell membrane</keyword>
<keyword id="KW-0472">Membrane</keyword>
<keyword id="KW-0574">Periplasm</keyword>
<keyword id="KW-1185">Reference proteome</keyword>
<keyword id="KW-0732">Signal</keyword>
<keyword id="KW-0808">Transferase</keyword>
<comment type="function">
    <text>Together with AlgI and AlgF, forms an inner membrane complex which probably interacts with the alginate polymerization-transport complex and adds acetyl groups at the O-2 and O-3 positions of mannuronate residues. Acetylation of alginate is important for the architecture of biofilms and increases resistance to opsonic killing in the host.</text>
</comment>
<comment type="pathway">
    <text>Glycan biosynthesis; alginate biosynthesis.</text>
</comment>
<comment type="subcellular location">
    <subcellularLocation>
        <location evidence="4">Cell inner membrane</location>
        <topology evidence="4">Peripheral membrane protein</topology>
        <orientation evidence="4">Periplasmic side</orientation>
    </subcellularLocation>
    <subcellularLocation>
        <location evidence="4">Periplasm</location>
    </subcellularLocation>
</comment>
<comment type="similarity">
    <text evidence="5">Belongs to the AlgJ family.</text>
</comment>
<feature type="signal peptide" evidence="2">
    <location>
        <begin position="1"/>
        <end position="39"/>
    </location>
</feature>
<feature type="chain" id="PRO_0000001120" description="Probable alginate O-acetylase AlgJ">
    <location>
        <begin position="40"/>
        <end position="391"/>
    </location>
</feature>
<feature type="region of interest" description="Disordered" evidence="3">
    <location>
        <begin position="259"/>
        <end position="286"/>
    </location>
</feature>
<feature type="active site" evidence="1">
    <location>
        <position position="193"/>
    </location>
</feature>
<feature type="active site" description="Proton acceptor" evidence="1">
    <location>
        <position position="195"/>
    </location>
</feature>
<feature type="active site" description="Nucleophile" evidence="1">
    <location>
        <position position="297"/>
    </location>
</feature>
<evidence type="ECO:0000250" key="1"/>
<evidence type="ECO:0000255" key="2"/>
<evidence type="ECO:0000256" key="3">
    <source>
        <dbReference type="SAM" id="MobiDB-lite"/>
    </source>
</evidence>
<evidence type="ECO:0000269" key="4">
    <source>
    </source>
</evidence>
<evidence type="ECO:0000305" key="5"/>
<gene>
    <name type="primary">algJ</name>
    <name type="ordered locus">PA3549</name>
</gene>
<name>ALGJ_PSEAE</name>
<reference key="1">
    <citation type="journal article" date="1996" name="J. Bacteriol.">
        <title>Identification of algI and algJ in the Pseudomonas aeruginosa alginate biosynthetic gene cluster which are required for alginate O acetylation.</title>
        <authorList>
            <person name="Franklin M.J."/>
            <person name="Ohman D.E."/>
        </authorList>
    </citation>
    <scope>NUCLEOTIDE SEQUENCE [GENOMIC DNA]</scope>
    <source>
        <strain>FRD1</strain>
    </source>
</reference>
<reference key="2">
    <citation type="journal article" date="2000" name="Nature">
        <title>Complete genome sequence of Pseudomonas aeruginosa PAO1, an opportunistic pathogen.</title>
        <authorList>
            <person name="Stover C.K."/>
            <person name="Pham X.-Q.T."/>
            <person name="Erwin A.L."/>
            <person name="Mizoguchi S.D."/>
            <person name="Warrener P."/>
            <person name="Hickey M.J."/>
            <person name="Brinkman F.S.L."/>
            <person name="Hufnagle W.O."/>
            <person name="Kowalik D.J."/>
            <person name="Lagrou M."/>
            <person name="Garber R.L."/>
            <person name="Goltry L."/>
            <person name="Tolentino E."/>
            <person name="Westbrock-Wadman S."/>
            <person name="Yuan Y."/>
            <person name="Brody L.L."/>
            <person name="Coulter S.N."/>
            <person name="Folger K.R."/>
            <person name="Kas A."/>
            <person name="Larbig K."/>
            <person name="Lim R.M."/>
            <person name="Smith K.A."/>
            <person name="Spencer D.H."/>
            <person name="Wong G.K.-S."/>
            <person name="Wu Z."/>
            <person name="Paulsen I.T."/>
            <person name="Reizer J."/>
            <person name="Saier M.H. Jr."/>
            <person name="Hancock R.E.W."/>
            <person name="Lory S."/>
            <person name="Olson M.V."/>
        </authorList>
    </citation>
    <scope>NUCLEOTIDE SEQUENCE [LARGE SCALE GENOMIC DNA]</scope>
    <source>
        <strain>ATCC 15692 / DSM 22644 / CIP 104116 / JCM 14847 / LMG 12228 / 1C / PRS 101 / PAO1</strain>
    </source>
</reference>
<reference key="3">
    <citation type="journal article" date="2002" name="J. Bacteriol.">
        <title>Mutant analysis and cellular localization of the AlgI, AlgJ, and AlgF proteins required for O acetylation of alginate in Pseudomonas aeruginosa.</title>
        <authorList>
            <person name="Franklin M.J."/>
            <person name="Ohman D.E."/>
        </authorList>
    </citation>
    <scope>SUBCELLULAR LOCATION</scope>
    <source>
        <strain>FRD1</strain>
    </source>
</reference>
<dbReference type="EC" id="2.3.1.-"/>
<dbReference type="EMBL" id="U50202">
    <property type="protein sequence ID" value="AAB09782.1"/>
    <property type="molecule type" value="Genomic_DNA"/>
</dbReference>
<dbReference type="EMBL" id="AE004091">
    <property type="protein sequence ID" value="AAG06937.1"/>
    <property type="molecule type" value="Genomic_DNA"/>
</dbReference>
<dbReference type="PIR" id="B83203">
    <property type="entry name" value="B83203"/>
</dbReference>
<dbReference type="RefSeq" id="NP_252239.1">
    <property type="nucleotide sequence ID" value="NC_002516.2"/>
</dbReference>
<dbReference type="RefSeq" id="WP_003092111.1">
    <property type="nucleotide sequence ID" value="NZ_QZGE01000001.1"/>
</dbReference>
<dbReference type="SMR" id="Q51393"/>
<dbReference type="STRING" id="208964.PA3549"/>
<dbReference type="PaxDb" id="208964-PA3549"/>
<dbReference type="GeneID" id="878716"/>
<dbReference type="KEGG" id="pae:PA3549"/>
<dbReference type="PATRIC" id="fig|208964.12.peg.3714"/>
<dbReference type="PseudoCAP" id="PA3549"/>
<dbReference type="HOGENOM" id="CLU_057510_0_0_6"/>
<dbReference type="InParanoid" id="Q51393"/>
<dbReference type="OrthoDB" id="9760774at2"/>
<dbReference type="PhylomeDB" id="Q51393"/>
<dbReference type="BioCyc" id="MetaCyc:MONOMER-19199"/>
<dbReference type="BioCyc" id="PAER208964:G1FZ6-3617-MONOMER"/>
<dbReference type="UniPathway" id="UPA00286"/>
<dbReference type="Proteomes" id="UP000002438">
    <property type="component" value="Chromosome"/>
</dbReference>
<dbReference type="GO" id="GO:0042597">
    <property type="term" value="C:periplasmic space"/>
    <property type="evidence" value="ECO:0007669"/>
    <property type="project" value="UniProtKB-SubCell"/>
</dbReference>
<dbReference type="GO" id="GO:0005886">
    <property type="term" value="C:plasma membrane"/>
    <property type="evidence" value="ECO:0007669"/>
    <property type="project" value="UniProtKB-SubCell"/>
</dbReference>
<dbReference type="GO" id="GO:0016746">
    <property type="term" value="F:acyltransferase activity"/>
    <property type="evidence" value="ECO:0007669"/>
    <property type="project" value="UniProtKB-KW"/>
</dbReference>
<dbReference type="GO" id="GO:0051979">
    <property type="term" value="P:alginic acid acetylation"/>
    <property type="evidence" value="ECO:0000314"/>
    <property type="project" value="PseudoCAP"/>
</dbReference>
<dbReference type="GO" id="GO:0042121">
    <property type="term" value="P:alginic acid biosynthetic process"/>
    <property type="evidence" value="ECO:0000314"/>
    <property type="project" value="PseudoCAP"/>
</dbReference>
<dbReference type="CDD" id="cd14442">
    <property type="entry name" value="AlgJ_like"/>
    <property type="match status" value="1"/>
</dbReference>
<dbReference type="InterPro" id="IPR034657">
    <property type="entry name" value="AlgJ"/>
</dbReference>
<dbReference type="InterPro" id="IPR031811">
    <property type="entry name" value="ALGX/ALGJ_SGNH-like"/>
</dbReference>
<dbReference type="Pfam" id="PF16822">
    <property type="entry name" value="ALGX"/>
    <property type="match status" value="1"/>
</dbReference>
<sequence>MTQSISRPLQYAYIAAFGGLLLGLAGWSLKSVPGFSAAADTPLLNGKLAHAFEAHYDKEFPIKRLGTNLWAALDYTLFHEGRPGVVIGKDGWLFTDEEFKPAPSGQQLEDNWALVRGVQRELNRRGVKLVLAVIPAKARLYPEHIGREQPAALHDSLYQDFLARARAAGIDSPDLLGSLRQAKDNGAVFLRTDTHWSPLGAETVAQRLGAEIRETHLLDVPAQNFVTRVGEERTHKGDLLSFLPLDPLFDELLPRPEQLQQRTTEAAPALPGGQQSGAGDDLFGDSQQPRLALVGTSYSANPRWNFEGALKQALSADLINYAKEGKGPLEPMLELLQDEGFRKDPPQLLVWEFPERYLPMASDLSQFDADWVAQLKASGGRDERLAASRND</sequence>
<organism>
    <name type="scientific">Pseudomonas aeruginosa (strain ATCC 15692 / DSM 22644 / CIP 104116 / JCM 14847 / LMG 12228 / 1C / PRS 101 / PAO1)</name>
    <dbReference type="NCBI Taxonomy" id="208964"/>
    <lineage>
        <taxon>Bacteria</taxon>
        <taxon>Pseudomonadati</taxon>
        <taxon>Pseudomonadota</taxon>
        <taxon>Gammaproteobacteria</taxon>
        <taxon>Pseudomonadales</taxon>
        <taxon>Pseudomonadaceae</taxon>
        <taxon>Pseudomonas</taxon>
    </lineage>
</organism>
<proteinExistence type="inferred from homology"/>